<evidence type="ECO:0000250" key="1"/>
<evidence type="ECO:0000256" key="2">
    <source>
        <dbReference type="SAM" id="MobiDB-lite"/>
    </source>
</evidence>
<evidence type="ECO:0000305" key="3"/>
<proteinExistence type="inferred from homology"/>
<feature type="chain" id="PRO_0000083197" description="Capsid protein">
    <location>
        <begin position="1"/>
        <end position="218"/>
    </location>
</feature>
<feature type="region of interest" description="Disordered" evidence="2">
    <location>
        <begin position="1"/>
        <end position="28"/>
    </location>
</feature>
<feature type="compositionally biased region" description="Basic residues" evidence="2">
    <location>
        <begin position="11"/>
        <end position="21"/>
    </location>
</feature>
<feature type="modified residue" description="N-acetylmethionine; by host" evidence="1">
    <location>
        <position position="1"/>
    </location>
</feature>
<name>CAPSD_CMVBA</name>
<reference key="1">
    <citation type="journal article" date="1996" name="Phytoparasitica">
        <title>Natural infection of banana by a satellite-containing strain of cucumber mosaic virus.</title>
        <authorList>
            <person name="Gafny R."/>
            <person name="Wexler A."/>
            <person name="Mawassi M."/>
            <person name="Israeli Y."/>
            <person name="Bar-Joseph M."/>
        </authorList>
    </citation>
    <scope>NUCLEOTIDE SEQUENCE [GENOMIC RNA]</scope>
</reference>
<keyword id="KW-0007">Acetylation</keyword>
<keyword id="KW-0167">Capsid protein</keyword>
<keyword id="KW-0687">Ribonucleoprotein</keyword>
<keyword id="KW-0694">RNA-binding</keyword>
<keyword id="KW-1142">T=3 icosahedral capsid protein</keyword>
<keyword id="KW-0543">Viral nucleoprotein</keyword>
<keyword id="KW-0946">Virion</keyword>
<organismHost>
    <name type="scientific">Cucumis sativus</name>
    <name type="common">Cucumber</name>
    <dbReference type="NCBI Taxonomy" id="3659"/>
</organismHost>
<organismHost>
    <name type="scientific">Solanum lycopersicum</name>
    <name type="common">Tomato</name>
    <name type="synonym">Lycopersicon esculentum</name>
    <dbReference type="NCBI Taxonomy" id="4081"/>
</organismHost>
<organismHost>
    <name type="scientific">Spinacia oleracea</name>
    <name type="common">Spinach</name>
    <dbReference type="NCBI Taxonomy" id="3562"/>
</organismHost>
<protein>
    <recommendedName>
        <fullName>Capsid protein</fullName>
        <shortName>CP</shortName>
    </recommendedName>
    <alternativeName>
        <fullName>Coat protein</fullName>
    </alternativeName>
</protein>
<organism>
    <name type="scientific">Cucumber mosaic virus (strain Banana)</name>
    <name type="common">CMV</name>
    <dbReference type="NCBI Taxonomy" id="117120"/>
    <lineage>
        <taxon>Viruses</taxon>
        <taxon>Riboviria</taxon>
        <taxon>Orthornavirae</taxon>
        <taxon>Kitrinoviricota</taxon>
        <taxon>Alsuviricetes</taxon>
        <taxon>Martellivirales</taxon>
        <taxon>Bromoviridae</taxon>
        <taxon>Cucumovirus</taxon>
        <taxon>Cucumber mosaic virus</taxon>
    </lineage>
</organism>
<dbReference type="EMBL" id="U43888">
    <property type="protein sequence ID" value="AAA87044.1"/>
    <property type="molecule type" value="Genomic_RNA"/>
</dbReference>
<dbReference type="SMR" id="Q66135"/>
<dbReference type="GO" id="GO:1990904">
    <property type="term" value="C:ribonucleoprotein complex"/>
    <property type="evidence" value="ECO:0007669"/>
    <property type="project" value="UniProtKB-KW"/>
</dbReference>
<dbReference type="GO" id="GO:0039617">
    <property type="term" value="C:T=3 icosahedral viral capsid"/>
    <property type="evidence" value="ECO:0007669"/>
    <property type="project" value="UniProtKB-KW"/>
</dbReference>
<dbReference type="GO" id="GO:0019013">
    <property type="term" value="C:viral nucleocapsid"/>
    <property type="evidence" value="ECO:0007669"/>
    <property type="project" value="UniProtKB-KW"/>
</dbReference>
<dbReference type="GO" id="GO:0003723">
    <property type="term" value="F:RNA binding"/>
    <property type="evidence" value="ECO:0007669"/>
    <property type="project" value="UniProtKB-KW"/>
</dbReference>
<dbReference type="GO" id="GO:0005198">
    <property type="term" value="F:structural molecule activity"/>
    <property type="evidence" value="ECO:0007669"/>
    <property type="project" value="InterPro"/>
</dbReference>
<dbReference type="Gene3D" id="2.60.120.530">
    <property type="entry name" value="Cucumovirus coat protein, subunit A"/>
    <property type="match status" value="1"/>
</dbReference>
<dbReference type="InterPro" id="IPR000247">
    <property type="entry name" value="Cucumovirus_coat"/>
</dbReference>
<dbReference type="InterPro" id="IPR037137">
    <property type="entry name" value="Cucumovirus_coat_Asu_sf"/>
</dbReference>
<dbReference type="Pfam" id="PF00760">
    <property type="entry name" value="Cucumo_coat"/>
    <property type="match status" value="1"/>
</dbReference>
<dbReference type="PRINTS" id="PR00222">
    <property type="entry name" value="CUCUMOCOAT"/>
</dbReference>
<dbReference type="SUPFAM" id="SSF88633">
    <property type="entry name" value="Positive stranded ssRNA viruses"/>
    <property type="match status" value="1"/>
</dbReference>
<comment type="function">
    <text evidence="1">Capsid protein. Probably binds RNA and plays a role in packaging (By similarity).</text>
</comment>
<comment type="subcellular location">
    <subcellularLocation>
        <location evidence="3">Virion</location>
    </subcellularLocation>
</comment>
<comment type="domain">
    <text evidence="1">The N-terminal arginine-rich stretch does not seem to be the major RNA-binding region that allows formation of an infectious ribonucleoprotein complex.</text>
</comment>
<comment type="similarity">
    <text evidence="3">Belongs to the cucumovirus capsid protein family.</text>
</comment>
<accession>Q66135</accession>
<sequence length="218" mass="24175">MDKSESTSAGRNRRRRPRRGSRSAPSSADANFRVLSQQLSRLNKTLAAGRPTINHPTFVGSERCRPGYTFTSITLKPPKIDRGSYYGKRLLLPDSVTEYDKKLVSRIQIRVNPLPKFDSTVWVTVRKVPASSDLSVAAISAMFADGASPVLVYQYAASGVQANNKFLYDLSAMRADIGDMRKYAVLVYSKDDALETDELVLHVDIEHQRIPTSGVLPV</sequence>
<gene>
    <name type="ORF">ORF3b</name>
</gene>